<comment type="function">
    <text evidence="6 7">The IFNLR1/IL10RB dimer is a receptor for the cytokine ligands IFNL2 and IFNL3 and mediates their antiviral activity. The ligand/receptor complex stimulate the activation of the JAK/STAT signaling pathway leading to the expression of IFN-stimulated genes (ISG), which contribute to the antiviral state. Determines the cell type specificity of the lambda interferon action. Shows a more restricted pattern of expression in the epithelial tissues thereby limiting responses to lambda interferons primarily to epithelial cells of the respiratory, gastrointestinal, and reproductive tracts. Seems not to be essential for early virus-activated host defense in vaginal infection, but plays an important role in Toll-like receptor (TLR)-induced antiviral defense. Plays a significant role in the antiviral immune defense in the intestinal epithelium.</text>
</comment>
<comment type="subunit">
    <text evidence="1">Heterodimer with IL10RB.</text>
</comment>
<comment type="subcellular location">
    <subcellularLocation>
        <location evidence="1">Membrane</location>
        <topology evidence="1">Single-pass type I membrane protein</topology>
    </subcellularLocation>
</comment>
<comment type="PTM">
    <text evidence="2">Ubiquitinated by FBXO45-containing E3 ligase leading to proteasomal degradation.</text>
</comment>
<comment type="disruption phenotype">
    <text evidence="6 7">The mice are viable and appear to be of normal size, behavior and reproductive ability. There is no effect on the ability to combat vaginal viral infection, but antiviral response evoked by Toll-like receptor (TLR) stimulation is reduced. Mice also display enhanced rotavirus susceptibility associated with epithelial vacuolization, villus deformation and epithelial cell disruption.</text>
</comment>
<comment type="similarity">
    <text evidence="8">Belongs to the type II cytokine receptor family.</text>
</comment>
<sequence>MWRADRWAPLLLFLLQSALGRPRLAPPRNVTLFSQNFTVYLTWLPGLGSPPNVTYFVTYQSYIKTGWRPVEHCAGIKALVCPLMCLKKLNLYSKFKGRVQAASAHGRSPRVESRYLEYLFDVELAPPTLVLTQMEKILRVNATYQLPPCMPSLELKYQVEFWKEGLGSKTLFPDTPYGQPVQIPLQQGASRRHCLSARTVYTLIDIKYSQFSEPSCIFLEAPGDKRAVLAMPSLLLLLIAAVAAGVAWKIMKGNPWFQGVKTPRALDFSEYRYPVATFQPSGPEFSDDLILCPQKELTIRNRPAPQVRNPATLQAGPERDSTEDEDEDTDYDDDGDSVQPYLERPLFISEKPRVMEHSETDESGVDSGGPWTSPVGSDGSSAWDSSDRSWSSTGDSSYKDEVGSSSCLDRKEPDQAPCGDWLQEALPCLEFSEDLGTVEEPLKDGLSGWRISGSLSSKRDLAPVEPPVSLQTLTFCWVNNPEGEEEQEDEEEEEEEEEEEDWESEPKGSNAGCWGTSSVQRTEVRGRMLGDYLVR</sequence>
<feature type="signal peptide" evidence="3">
    <location>
        <begin position="1"/>
        <end position="20"/>
    </location>
</feature>
<feature type="chain" id="PRO_0000011020" description="Interferon lambda receptor 1">
    <location>
        <begin position="21"/>
        <end position="535"/>
    </location>
</feature>
<feature type="topological domain" description="Extracellular" evidence="3">
    <location>
        <begin position="21"/>
        <end position="227"/>
    </location>
</feature>
<feature type="transmembrane region" description="Helical" evidence="3">
    <location>
        <begin position="228"/>
        <end position="248"/>
    </location>
</feature>
<feature type="topological domain" description="Cytoplasmic" evidence="3">
    <location>
        <begin position="249"/>
        <end position="535"/>
    </location>
</feature>
<feature type="domain" description="Fibronectin type-III" evidence="4">
    <location>
        <begin position="26"/>
        <end position="121"/>
    </location>
</feature>
<feature type="region of interest" description="Disordered" evidence="5">
    <location>
        <begin position="301"/>
        <end position="419"/>
    </location>
</feature>
<feature type="region of interest" description="Disordered" evidence="5">
    <location>
        <begin position="478"/>
        <end position="520"/>
    </location>
</feature>
<feature type="compositionally biased region" description="Acidic residues" evidence="5">
    <location>
        <begin position="321"/>
        <end position="336"/>
    </location>
</feature>
<feature type="compositionally biased region" description="Basic and acidic residues" evidence="5">
    <location>
        <begin position="350"/>
        <end position="360"/>
    </location>
</feature>
<feature type="compositionally biased region" description="Low complexity" evidence="5">
    <location>
        <begin position="376"/>
        <end position="396"/>
    </location>
</feature>
<feature type="compositionally biased region" description="Basic and acidic residues" evidence="5">
    <location>
        <begin position="397"/>
        <end position="414"/>
    </location>
</feature>
<feature type="compositionally biased region" description="Acidic residues" evidence="5">
    <location>
        <begin position="482"/>
        <end position="503"/>
    </location>
</feature>
<feature type="glycosylation site" description="N-linked (GlcNAc...) asparagine" evidence="3">
    <location>
        <position position="29"/>
    </location>
</feature>
<feature type="glycosylation site" description="N-linked (GlcNAc...) asparagine" evidence="3">
    <location>
        <position position="36"/>
    </location>
</feature>
<feature type="glycosylation site" description="N-linked (GlcNAc...) asparagine" evidence="3">
    <location>
        <position position="52"/>
    </location>
</feature>
<feature type="glycosylation site" description="N-linked (GlcNAc...) asparagine" evidence="3">
    <location>
        <position position="141"/>
    </location>
</feature>
<feature type="disulfide bond" evidence="1">
    <location>
        <begin position="73"/>
        <end position="81"/>
    </location>
</feature>
<feature type="disulfide bond" evidence="1">
    <location>
        <begin position="85"/>
        <end position="149"/>
    </location>
</feature>
<feature type="disulfide bond" evidence="1">
    <location>
        <begin position="194"/>
        <end position="216"/>
    </location>
</feature>
<feature type="sequence conflict" description="In Ref. 2; AAH57856." evidence="8" ref="2">
    <original>H</original>
    <variation>Q</variation>
    <location>
        <position position="105"/>
    </location>
</feature>
<feature type="sequence conflict" description="In Ref. 2; AAH57856." evidence="8" ref="2">
    <original>M</original>
    <variation>L</variation>
    <location>
        <position position="231"/>
    </location>
</feature>
<feature type="sequence conflict" description="In Ref. 2; AAH57856." evidence="8" ref="2">
    <original>E</original>
    <variation>G</variation>
    <location>
        <position position="327"/>
    </location>
</feature>
<accession>Q8CGK5</accession>
<accession>Q6PEV1</accession>
<gene>
    <name type="primary">Ifnlr1</name>
    <name type="synonym">Il28ra</name>
</gene>
<protein>
    <recommendedName>
        <fullName>Interferon lambda receptor 1</fullName>
        <shortName>IFN-lambda R1</shortName>
    </recommendedName>
    <alternativeName>
        <fullName>Cytokine receptor class-II member 12</fullName>
    </alternativeName>
    <alternativeName>
        <fullName>Cytokine receptor family 2 member 12</fullName>
        <shortName>CRF2-12</shortName>
    </alternativeName>
    <alternativeName>
        <fullName>Interleukin-28 receptor subunit alpha</fullName>
        <shortName>IL-28 receptor subunit alpha</shortName>
        <shortName>IL-28R-alpha</shortName>
        <shortName>IL-28RA</shortName>
    </alternativeName>
</protein>
<evidence type="ECO:0000250" key="1"/>
<evidence type="ECO:0000250" key="2">
    <source>
        <dbReference type="UniProtKB" id="Q8IU57"/>
    </source>
</evidence>
<evidence type="ECO:0000255" key="3"/>
<evidence type="ECO:0000255" key="4">
    <source>
        <dbReference type="PROSITE-ProRule" id="PRU00316"/>
    </source>
</evidence>
<evidence type="ECO:0000256" key="5">
    <source>
        <dbReference type="SAM" id="MobiDB-lite"/>
    </source>
</evidence>
<evidence type="ECO:0000269" key="6">
    <source>
    </source>
</evidence>
<evidence type="ECO:0000269" key="7">
    <source>
    </source>
</evidence>
<evidence type="ECO:0000305" key="8"/>
<dbReference type="EMBL" id="AY184376">
    <property type="protein sequence ID" value="AAN86129.1"/>
    <property type="molecule type" value="mRNA"/>
</dbReference>
<dbReference type="EMBL" id="BC057856">
    <property type="protein sequence ID" value="AAH57856.1"/>
    <property type="molecule type" value="mRNA"/>
</dbReference>
<dbReference type="CCDS" id="CCDS18788.1"/>
<dbReference type="RefSeq" id="NP_777276.3">
    <property type="nucleotide sequence ID" value="NM_174851.3"/>
</dbReference>
<dbReference type="PDB" id="7T6F">
    <property type="method" value="EM"/>
    <property type="resolution" value="3.60 A"/>
    <property type="chains" value="C/D=249-298"/>
</dbReference>
<dbReference type="PDB" id="8EWY">
    <property type="method" value="EM"/>
    <property type="resolution" value="5.50 A"/>
    <property type="chains" value="C/D=249-298"/>
</dbReference>
<dbReference type="PDBsum" id="7T6F"/>
<dbReference type="PDBsum" id="8EWY"/>
<dbReference type="EMDB" id="EMD-25715"/>
<dbReference type="EMDB" id="EMD-28649"/>
<dbReference type="SMR" id="Q8CGK5"/>
<dbReference type="FunCoup" id="Q8CGK5">
    <property type="interactions" value="351"/>
</dbReference>
<dbReference type="STRING" id="10090.ENSMUSP00000074009"/>
<dbReference type="GlyCosmos" id="Q8CGK5">
    <property type="glycosylation" value="4 sites, No reported glycans"/>
</dbReference>
<dbReference type="GlyGen" id="Q8CGK5">
    <property type="glycosylation" value="4 sites"/>
</dbReference>
<dbReference type="iPTMnet" id="Q8CGK5"/>
<dbReference type="PhosphoSitePlus" id="Q8CGK5"/>
<dbReference type="PaxDb" id="10090-ENSMUSP00000074009"/>
<dbReference type="Antibodypedia" id="2700">
    <property type="antibodies" value="268 antibodies from 30 providers"/>
</dbReference>
<dbReference type="DNASU" id="242700"/>
<dbReference type="Ensembl" id="ENSMUST00000074408.7">
    <property type="protein sequence ID" value="ENSMUSP00000074009.7"/>
    <property type="gene ID" value="ENSMUSG00000062157.7"/>
</dbReference>
<dbReference type="GeneID" id="242700"/>
<dbReference type="KEGG" id="mmu:242700"/>
<dbReference type="UCSC" id="uc008vgw.2">
    <property type="organism name" value="mouse"/>
</dbReference>
<dbReference type="AGR" id="MGI:2429859"/>
<dbReference type="CTD" id="163702"/>
<dbReference type="MGI" id="MGI:2429859">
    <property type="gene designation" value="Ifnlr1"/>
</dbReference>
<dbReference type="VEuPathDB" id="HostDB:ENSMUSG00000062157"/>
<dbReference type="eggNOG" id="ENOG502S4B0">
    <property type="taxonomic scope" value="Eukaryota"/>
</dbReference>
<dbReference type="GeneTree" id="ENSGT00510000048978"/>
<dbReference type="HOGENOM" id="CLU_043104_1_0_1"/>
<dbReference type="InParanoid" id="Q8CGK5"/>
<dbReference type="OMA" id="FLCPQKE"/>
<dbReference type="OrthoDB" id="10031784at2759"/>
<dbReference type="PhylomeDB" id="Q8CGK5"/>
<dbReference type="TreeFam" id="TF336003"/>
<dbReference type="Reactome" id="R-MMU-8854691">
    <property type="pathway name" value="Interleukin-20 family signaling"/>
</dbReference>
<dbReference type="BioGRID-ORCS" id="242700">
    <property type="hits" value="1 hit in 76 CRISPR screens"/>
</dbReference>
<dbReference type="PRO" id="PR:Q8CGK5"/>
<dbReference type="Proteomes" id="UP000000589">
    <property type="component" value="Chromosome 4"/>
</dbReference>
<dbReference type="RNAct" id="Q8CGK5">
    <property type="molecule type" value="protein"/>
</dbReference>
<dbReference type="Bgee" id="ENSMUSG00000062157">
    <property type="expression patterns" value="Expressed in granulocyte and 73 other cell types or tissues"/>
</dbReference>
<dbReference type="ExpressionAtlas" id="Q8CGK5">
    <property type="expression patterns" value="baseline and differential"/>
</dbReference>
<dbReference type="GO" id="GO:0032002">
    <property type="term" value="C:interleukin-28 receptor complex"/>
    <property type="evidence" value="ECO:0007669"/>
    <property type="project" value="Ensembl"/>
</dbReference>
<dbReference type="GO" id="GO:0004896">
    <property type="term" value="F:cytokine receptor activity"/>
    <property type="evidence" value="ECO:0000266"/>
    <property type="project" value="MGI"/>
</dbReference>
<dbReference type="GO" id="GO:0051607">
    <property type="term" value="P:defense response to virus"/>
    <property type="evidence" value="ECO:0000315"/>
    <property type="project" value="UniProtKB"/>
</dbReference>
<dbReference type="GO" id="GO:0002385">
    <property type="term" value="P:mucosal immune response"/>
    <property type="evidence" value="ECO:0000315"/>
    <property type="project" value="UniProtKB"/>
</dbReference>
<dbReference type="GO" id="GO:1901857">
    <property type="term" value="P:positive regulation of cellular respiration"/>
    <property type="evidence" value="ECO:0007669"/>
    <property type="project" value="Ensembl"/>
</dbReference>
<dbReference type="GO" id="GO:0050691">
    <property type="term" value="P:regulation of defense response to virus by host"/>
    <property type="evidence" value="ECO:0007669"/>
    <property type="project" value="Ensembl"/>
</dbReference>
<dbReference type="GO" id="GO:0034342">
    <property type="term" value="P:response to type III interferon"/>
    <property type="evidence" value="ECO:0000250"/>
    <property type="project" value="UniProtKB"/>
</dbReference>
<dbReference type="CDD" id="cd21910">
    <property type="entry name" value="JAK1bd_box_IFNLR1"/>
    <property type="match status" value="1"/>
</dbReference>
<dbReference type="FunFam" id="2.60.40.10:FF:001235">
    <property type="entry name" value="Interferon lambda receptor 1"/>
    <property type="match status" value="1"/>
</dbReference>
<dbReference type="FunFam" id="2.60.40.10:FF:001357">
    <property type="entry name" value="Interferon lambda receptor 1"/>
    <property type="match status" value="1"/>
</dbReference>
<dbReference type="Gene3D" id="2.60.40.10">
    <property type="entry name" value="Immunoglobulins"/>
    <property type="match status" value="2"/>
</dbReference>
<dbReference type="InterPro" id="IPR003961">
    <property type="entry name" value="FN3_dom"/>
</dbReference>
<dbReference type="InterPro" id="IPR036116">
    <property type="entry name" value="FN3_sf"/>
</dbReference>
<dbReference type="InterPro" id="IPR013783">
    <property type="entry name" value="Ig-like_fold"/>
</dbReference>
<dbReference type="InterPro" id="IPR050650">
    <property type="entry name" value="Type-II_Cytokine-TF_Rcpt"/>
</dbReference>
<dbReference type="PANTHER" id="PTHR20859:SF55">
    <property type="entry name" value="INTERFERON LAMBDA RECEPTOR 1"/>
    <property type="match status" value="1"/>
</dbReference>
<dbReference type="PANTHER" id="PTHR20859">
    <property type="entry name" value="INTERFERON/INTERLEUKIN RECEPTOR"/>
    <property type="match status" value="1"/>
</dbReference>
<dbReference type="Pfam" id="PF01108">
    <property type="entry name" value="Tissue_fac"/>
    <property type="match status" value="1"/>
</dbReference>
<dbReference type="SUPFAM" id="SSF49265">
    <property type="entry name" value="Fibronectin type III"/>
    <property type="match status" value="2"/>
</dbReference>
<dbReference type="PROSITE" id="PS50853">
    <property type="entry name" value="FN3"/>
    <property type="match status" value="1"/>
</dbReference>
<name>INLR1_MOUSE</name>
<reference key="1">
    <citation type="journal article" date="2003" name="Nat. Immunol.">
        <title>IFN-lambdas mediate antiviral protection through a distinct class II cytokine receptor complex.</title>
        <authorList>
            <person name="Kotenko S.V."/>
            <person name="Gallagher G."/>
            <person name="Baurin V.V."/>
            <person name="Lewis-Antes A."/>
            <person name="Shen M."/>
            <person name="Shah N.K."/>
            <person name="Langer J.A."/>
            <person name="Sheikh F."/>
            <person name="Dickensheets H."/>
            <person name="Donnelly R.P."/>
        </authorList>
    </citation>
    <scope>NUCLEOTIDE SEQUENCE [MRNA]</scope>
    <source>
        <strain>C57BL/6J</strain>
    </source>
</reference>
<reference key="2">
    <citation type="journal article" date="2004" name="Genome Res.">
        <title>The status, quality, and expansion of the NIH full-length cDNA project: the Mammalian Gene Collection (MGC).</title>
        <authorList>
            <consortium name="The MGC Project Team"/>
        </authorList>
    </citation>
    <scope>NUCLEOTIDE SEQUENCE [LARGE SCALE MRNA]</scope>
    <source>
        <strain>Czech II</strain>
        <tissue>Mammary gland</tissue>
    </source>
</reference>
<reference key="3">
    <citation type="journal article" date="2008" name="J. Immunol.">
        <title>An important role for type III interferon (IFN-lambda/IL-28) in TLR-induced antiviral activity.</title>
        <authorList>
            <person name="Ank N."/>
            <person name="Iversen M.B."/>
            <person name="Bartholdy C."/>
            <person name="Staeheli P."/>
            <person name="Hartmann R."/>
            <person name="Jensen U.B."/>
            <person name="Dagnaes-Hansen F."/>
            <person name="Thomsen A.R."/>
            <person name="Chen Z."/>
            <person name="Haugen H."/>
            <person name="Klucher K."/>
            <person name="Paludan S.R."/>
        </authorList>
    </citation>
    <scope>FUNCTION</scope>
    <scope>DISRUPTION PHENOTYPE</scope>
</reference>
<reference key="4">
    <citation type="journal article" date="2011" name="Proc. Natl. Acad. Sci. U.S.A.">
        <title>IFN-lambda determines the intestinal epithelial antiviral host defense.</title>
        <authorList>
            <person name="Pott J."/>
            <person name="Mahlakoiv T."/>
            <person name="Mordstein M."/>
            <person name="Duerr C.U."/>
            <person name="Michiels T."/>
            <person name="Stockinger S."/>
            <person name="Staeheli P."/>
            <person name="Hornef M.W."/>
        </authorList>
    </citation>
    <scope>FUNCTION</scope>
    <scope>DISRUPTION PHENOTYPE</scope>
</reference>
<organism>
    <name type="scientific">Mus musculus</name>
    <name type="common">Mouse</name>
    <dbReference type="NCBI Taxonomy" id="10090"/>
    <lineage>
        <taxon>Eukaryota</taxon>
        <taxon>Metazoa</taxon>
        <taxon>Chordata</taxon>
        <taxon>Craniata</taxon>
        <taxon>Vertebrata</taxon>
        <taxon>Euteleostomi</taxon>
        <taxon>Mammalia</taxon>
        <taxon>Eutheria</taxon>
        <taxon>Euarchontoglires</taxon>
        <taxon>Glires</taxon>
        <taxon>Rodentia</taxon>
        <taxon>Myomorpha</taxon>
        <taxon>Muroidea</taxon>
        <taxon>Muridae</taxon>
        <taxon>Murinae</taxon>
        <taxon>Mus</taxon>
        <taxon>Mus</taxon>
    </lineage>
</organism>
<keyword id="KW-0002">3D-structure</keyword>
<keyword id="KW-0051">Antiviral defense</keyword>
<keyword id="KW-1015">Disulfide bond</keyword>
<keyword id="KW-0325">Glycoprotein</keyword>
<keyword id="KW-0472">Membrane</keyword>
<keyword id="KW-0675">Receptor</keyword>
<keyword id="KW-1185">Reference proteome</keyword>
<keyword id="KW-0732">Signal</keyword>
<keyword id="KW-0812">Transmembrane</keyword>
<keyword id="KW-1133">Transmembrane helix</keyword>
<keyword id="KW-0832">Ubl conjugation</keyword>
<proteinExistence type="evidence at protein level"/>